<evidence type="ECO:0000250" key="1"/>
<evidence type="ECO:0000255" key="2"/>
<evidence type="ECO:0000255" key="3">
    <source>
        <dbReference type="PROSITE-ProRule" id="PRU01210"/>
    </source>
</evidence>
<evidence type="ECO:0000305" key="4"/>
<organism>
    <name type="scientific">Centruroides exilicauda</name>
    <name type="common">Bark scorpion</name>
    <name type="synonym">Buthus exilicauda</name>
    <dbReference type="NCBI Taxonomy" id="6879"/>
    <lineage>
        <taxon>Eukaryota</taxon>
        <taxon>Metazoa</taxon>
        <taxon>Ecdysozoa</taxon>
        <taxon>Arthropoda</taxon>
        <taxon>Chelicerata</taxon>
        <taxon>Arachnida</taxon>
        <taxon>Scorpiones</taxon>
        <taxon>Buthida</taxon>
        <taxon>Buthoidea</taxon>
        <taxon>Buthidae</taxon>
        <taxon>Centruroides</taxon>
    </lineage>
</organism>
<dbReference type="EMBL" id="AY649863">
    <property type="protein sequence ID" value="AAT97996.1"/>
    <property type="molecule type" value="mRNA"/>
</dbReference>
<dbReference type="SMR" id="Q68PH0"/>
<dbReference type="GO" id="GO:0005576">
    <property type="term" value="C:extracellular region"/>
    <property type="evidence" value="ECO:0007669"/>
    <property type="project" value="UniProtKB-SubCell"/>
</dbReference>
<dbReference type="GO" id="GO:0019871">
    <property type="term" value="F:sodium channel inhibitor activity"/>
    <property type="evidence" value="ECO:0007669"/>
    <property type="project" value="InterPro"/>
</dbReference>
<dbReference type="GO" id="GO:0090729">
    <property type="term" value="F:toxin activity"/>
    <property type="evidence" value="ECO:0007669"/>
    <property type="project" value="UniProtKB-KW"/>
</dbReference>
<dbReference type="GO" id="GO:0006952">
    <property type="term" value="P:defense response"/>
    <property type="evidence" value="ECO:0007669"/>
    <property type="project" value="InterPro"/>
</dbReference>
<dbReference type="CDD" id="cd23106">
    <property type="entry name" value="neurotoxins_LC_scorpion"/>
    <property type="match status" value="1"/>
</dbReference>
<dbReference type="FunFam" id="3.30.30.10:FF:000002">
    <property type="entry name" value="Alpha-like toxin BmK-M1"/>
    <property type="match status" value="1"/>
</dbReference>
<dbReference type="Gene3D" id="3.30.30.10">
    <property type="entry name" value="Knottin, scorpion toxin-like"/>
    <property type="match status" value="1"/>
</dbReference>
<dbReference type="InterPro" id="IPR044062">
    <property type="entry name" value="LCN-type_CS_alpha_beta_dom"/>
</dbReference>
<dbReference type="InterPro" id="IPR003614">
    <property type="entry name" value="Scorpion_toxin-like"/>
</dbReference>
<dbReference type="InterPro" id="IPR036574">
    <property type="entry name" value="Scorpion_toxin-like_sf"/>
</dbReference>
<dbReference type="InterPro" id="IPR018218">
    <property type="entry name" value="Scorpion_toxinL"/>
</dbReference>
<dbReference type="InterPro" id="IPR002061">
    <property type="entry name" value="Scorpion_toxinL/defensin"/>
</dbReference>
<dbReference type="Pfam" id="PF00537">
    <property type="entry name" value="Toxin_3"/>
    <property type="match status" value="1"/>
</dbReference>
<dbReference type="PRINTS" id="PR00285">
    <property type="entry name" value="SCORPNTOXIN"/>
</dbReference>
<dbReference type="SMART" id="SM00505">
    <property type="entry name" value="Knot1"/>
    <property type="match status" value="1"/>
</dbReference>
<dbReference type="SUPFAM" id="SSF57095">
    <property type="entry name" value="Scorpion toxin-like"/>
    <property type="match status" value="1"/>
</dbReference>
<dbReference type="PROSITE" id="PS51863">
    <property type="entry name" value="LCN_CSAB"/>
    <property type="match status" value="1"/>
</dbReference>
<protein>
    <recommendedName>
        <fullName>Neurotoxin Cex5</fullName>
    </recommendedName>
</protein>
<feature type="signal peptide" evidence="2">
    <location>
        <begin position="1" status="less than"/>
        <end position="1"/>
    </location>
</feature>
<feature type="chain" id="PRO_0000254070" description="Neurotoxin Cex5">
    <location>
        <begin position="2"/>
        <end position="66"/>
    </location>
</feature>
<feature type="propeptide" id="PRO_0000254071">
    <location>
        <begin position="67"/>
        <end position="69"/>
    </location>
</feature>
<feature type="domain" description="LCN-type CS-alpha/beta" evidence="3">
    <location>
        <begin position="2"/>
        <end position="67"/>
    </location>
</feature>
<feature type="modified residue" description="Cysteine amide" evidence="2">
    <location>
        <position position="66"/>
    </location>
</feature>
<feature type="disulfide bond" evidence="3">
    <location>
        <begin position="13"/>
        <end position="66"/>
    </location>
</feature>
<feature type="disulfide bond" evidence="3">
    <location>
        <begin position="17"/>
        <end position="42"/>
    </location>
</feature>
<feature type="disulfide bond" evidence="3">
    <location>
        <begin position="26"/>
        <end position="47"/>
    </location>
</feature>
<feature type="disulfide bond" evidence="3">
    <location>
        <begin position="30"/>
        <end position="49"/>
    </location>
</feature>
<feature type="non-terminal residue">
    <location>
        <position position="1"/>
    </location>
</feature>
<comment type="function">
    <text evidence="1">Beta toxins bind voltage-independently at site-4 of sodium channels (Nav) and shift the voltage of activation toward more negative potentials thereby affecting sodium channel activation and promoting spontaneous and repetitive firing.</text>
</comment>
<comment type="subcellular location">
    <subcellularLocation>
        <location evidence="1">Secreted</location>
    </subcellularLocation>
</comment>
<comment type="tissue specificity">
    <text>Expressed by the venom gland.</text>
</comment>
<comment type="domain">
    <text evidence="4">Has the structural arrangement of an alpha-helix connected to antiparallel beta-sheets by disulfide bonds (CS-alpha/beta).</text>
</comment>
<comment type="similarity">
    <text evidence="4">Belongs to the long (4 C-C) scorpion toxin superfamily. Sodium channel inhibitor family. Beta subfamily.</text>
</comment>
<proteinExistence type="evidence at transcript level"/>
<accession>Q68PH0</accession>
<name>SCX5_CENEX</name>
<sequence length="69" mass="7507">AKDGYLVSKSTGCKYECFWLGKNEGCDKECKAPNQGGGYGYCHAFACWCENLPESTPTYPIPGKSCGKK</sequence>
<keyword id="KW-0027">Amidation</keyword>
<keyword id="KW-1015">Disulfide bond</keyword>
<keyword id="KW-0872">Ion channel impairing toxin</keyword>
<keyword id="KW-0528">Neurotoxin</keyword>
<keyword id="KW-0964">Secreted</keyword>
<keyword id="KW-0732">Signal</keyword>
<keyword id="KW-0800">Toxin</keyword>
<keyword id="KW-0738">Voltage-gated sodium channel impairing toxin</keyword>
<reference key="1">
    <citation type="journal article" date="2004" name="Biochimie">
        <title>Biochemical, genetic and physiological characterization of venom components from two species of scorpions: Centruroides exilicauda Wood and Centruroides sculpturatus Ewing.</title>
        <authorList>
            <person name="Valdez-Cruz N.A."/>
            <person name="Davila S."/>
            <person name="Licea A."/>
            <person name="Corona M."/>
            <person name="Zamudio F.Z."/>
            <person name="Garcia-Valdes J."/>
            <person name="Boyer L."/>
            <person name="Possani L.D."/>
        </authorList>
    </citation>
    <scope>NUCLEOTIDE SEQUENCE [MRNA]</scope>
    <source>
        <tissue>Venom gland</tissue>
    </source>
</reference>